<feature type="chain" id="PRO_1000016374" description="Histidine--tRNA ligase">
    <location>
        <begin position="1"/>
        <end position="505"/>
    </location>
</feature>
<gene>
    <name evidence="1" type="primary">hisS</name>
    <name type="ordered locus">Jann_0945</name>
</gene>
<accession>Q28TV0</accession>
<reference key="1">
    <citation type="submission" date="2006-02" db="EMBL/GenBank/DDBJ databases">
        <title>Complete sequence of chromosome of Jannaschia sp. CCS1.</title>
        <authorList>
            <consortium name="US DOE Joint Genome Institute"/>
            <person name="Copeland A."/>
            <person name="Lucas S."/>
            <person name="Lapidus A."/>
            <person name="Barry K."/>
            <person name="Detter J.C."/>
            <person name="Glavina del Rio T."/>
            <person name="Hammon N."/>
            <person name="Israni S."/>
            <person name="Pitluck S."/>
            <person name="Brettin T."/>
            <person name="Bruce D."/>
            <person name="Han C."/>
            <person name="Tapia R."/>
            <person name="Gilna P."/>
            <person name="Chertkov O."/>
            <person name="Saunders E."/>
            <person name="Schmutz J."/>
            <person name="Larimer F."/>
            <person name="Land M."/>
            <person name="Kyrpides N."/>
            <person name="Lykidis A."/>
            <person name="Moran M.A."/>
            <person name="Belas R."/>
            <person name="Ye W."/>
            <person name="Buchan A."/>
            <person name="Gonzalez J.M."/>
            <person name="Schell M.A."/>
            <person name="Richardson P."/>
        </authorList>
    </citation>
    <scope>NUCLEOTIDE SEQUENCE [LARGE SCALE GENOMIC DNA]</scope>
    <source>
        <strain>CCS1</strain>
    </source>
</reference>
<sequence length="505" mass="54487">MAKQKKQPRPKAETPKGFRDYFGAEVVERQTMLRKIGEVYHRYGFDPLETSAVETVEALGKFLPDVDRPNEGVFAFQEDGGSDDGKWLALRYDMTAPLARVAAQFRERPLPGQEDSLPSPYRRYTMGPVWRNEKPGPGRFRQFYQCDADTVGAPSVAADAEICAMLADCLEAVGIERGDYVVRVNNRKVLNGVMEVAGLAGDDKEAARGIVLRAIDKMDRLGAGGVRDLLGDGRKDESGDFTKGAGISSANADKILAFVQATAGDNAATVSNLKSLTEGSDIGTQGVSELEQIASLLAAQGYGPDRIIIDPSVVRGLGYYTGPVYEAELTFDVQNEKGQTVQFGSVAGGGRYDDLVKRFTGQEVPATGVSIGVDRLLAALHATGKLKGEDAGPVIVTVMDRDRMAEYQAMVATLRNAGIRAEVYLGNPKNFGNQLKYADKRRSPVAIIQGSDEAARGVVQLKDLILGAKLAEDATLEEWKSQPAQTEVAVADLVAEVQAIIARHK</sequence>
<name>SYH_JANSC</name>
<keyword id="KW-0030">Aminoacyl-tRNA synthetase</keyword>
<keyword id="KW-0067">ATP-binding</keyword>
<keyword id="KW-0963">Cytoplasm</keyword>
<keyword id="KW-0436">Ligase</keyword>
<keyword id="KW-0547">Nucleotide-binding</keyword>
<keyword id="KW-0648">Protein biosynthesis</keyword>
<keyword id="KW-1185">Reference proteome</keyword>
<proteinExistence type="inferred from homology"/>
<dbReference type="EC" id="6.1.1.21" evidence="1"/>
<dbReference type="EMBL" id="CP000264">
    <property type="protein sequence ID" value="ABD53862.1"/>
    <property type="molecule type" value="Genomic_DNA"/>
</dbReference>
<dbReference type="RefSeq" id="WP_011454070.1">
    <property type="nucleotide sequence ID" value="NC_007802.1"/>
</dbReference>
<dbReference type="SMR" id="Q28TV0"/>
<dbReference type="STRING" id="290400.Jann_0945"/>
<dbReference type="KEGG" id="jan:Jann_0945"/>
<dbReference type="eggNOG" id="COG0124">
    <property type="taxonomic scope" value="Bacteria"/>
</dbReference>
<dbReference type="HOGENOM" id="CLU_025113_3_2_5"/>
<dbReference type="OrthoDB" id="9800814at2"/>
<dbReference type="Proteomes" id="UP000008326">
    <property type="component" value="Chromosome"/>
</dbReference>
<dbReference type="GO" id="GO:0005737">
    <property type="term" value="C:cytoplasm"/>
    <property type="evidence" value="ECO:0007669"/>
    <property type="project" value="UniProtKB-SubCell"/>
</dbReference>
<dbReference type="GO" id="GO:0005524">
    <property type="term" value="F:ATP binding"/>
    <property type="evidence" value="ECO:0007669"/>
    <property type="project" value="UniProtKB-UniRule"/>
</dbReference>
<dbReference type="GO" id="GO:0004821">
    <property type="term" value="F:histidine-tRNA ligase activity"/>
    <property type="evidence" value="ECO:0007669"/>
    <property type="project" value="UniProtKB-UniRule"/>
</dbReference>
<dbReference type="GO" id="GO:0006427">
    <property type="term" value="P:histidyl-tRNA aminoacylation"/>
    <property type="evidence" value="ECO:0007669"/>
    <property type="project" value="UniProtKB-UniRule"/>
</dbReference>
<dbReference type="CDD" id="cd00773">
    <property type="entry name" value="HisRS-like_core"/>
    <property type="match status" value="1"/>
</dbReference>
<dbReference type="CDD" id="cd00859">
    <property type="entry name" value="HisRS_anticodon"/>
    <property type="match status" value="1"/>
</dbReference>
<dbReference type="Gene3D" id="3.40.50.800">
    <property type="entry name" value="Anticodon-binding domain"/>
    <property type="match status" value="1"/>
</dbReference>
<dbReference type="Gene3D" id="3.30.930.10">
    <property type="entry name" value="Bira Bifunctional Protein, Domain 2"/>
    <property type="match status" value="1"/>
</dbReference>
<dbReference type="HAMAP" id="MF_00127">
    <property type="entry name" value="His_tRNA_synth"/>
    <property type="match status" value="1"/>
</dbReference>
<dbReference type="InterPro" id="IPR006195">
    <property type="entry name" value="aa-tRNA-synth_II"/>
</dbReference>
<dbReference type="InterPro" id="IPR045864">
    <property type="entry name" value="aa-tRNA-synth_II/BPL/LPL"/>
</dbReference>
<dbReference type="InterPro" id="IPR004154">
    <property type="entry name" value="Anticodon-bd"/>
</dbReference>
<dbReference type="InterPro" id="IPR036621">
    <property type="entry name" value="Anticodon-bd_dom_sf"/>
</dbReference>
<dbReference type="InterPro" id="IPR015807">
    <property type="entry name" value="His-tRNA-ligase"/>
</dbReference>
<dbReference type="InterPro" id="IPR041715">
    <property type="entry name" value="HisRS-like_core"/>
</dbReference>
<dbReference type="InterPro" id="IPR004516">
    <property type="entry name" value="HisRS/HisZ"/>
</dbReference>
<dbReference type="InterPro" id="IPR033656">
    <property type="entry name" value="HisRS_anticodon"/>
</dbReference>
<dbReference type="NCBIfam" id="TIGR00442">
    <property type="entry name" value="hisS"/>
    <property type="match status" value="1"/>
</dbReference>
<dbReference type="PANTHER" id="PTHR11476:SF7">
    <property type="entry name" value="HISTIDINE--TRNA LIGASE"/>
    <property type="match status" value="1"/>
</dbReference>
<dbReference type="PANTHER" id="PTHR11476">
    <property type="entry name" value="HISTIDYL-TRNA SYNTHETASE"/>
    <property type="match status" value="1"/>
</dbReference>
<dbReference type="Pfam" id="PF03129">
    <property type="entry name" value="HGTP_anticodon"/>
    <property type="match status" value="1"/>
</dbReference>
<dbReference type="Pfam" id="PF13393">
    <property type="entry name" value="tRNA-synt_His"/>
    <property type="match status" value="1"/>
</dbReference>
<dbReference type="PIRSF" id="PIRSF001549">
    <property type="entry name" value="His-tRNA_synth"/>
    <property type="match status" value="1"/>
</dbReference>
<dbReference type="SUPFAM" id="SSF52954">
    <property type="entry name" value="Class II aaRS ABD-related"/>
    <property type="match status" value="1"/>
</dbReference>
<dbReference type="SUPFAM" id="SSF55681">
    <property type="entry name" value="Class II aaRS and biotin synthetases"/>
    <property type="match status" value="1"/>
</dbReference>
<dbReference type="PROSITE" id="PS50862">
    <property type="entry name" value="AA_TRNA_LIGASE_II"/>
    <property type="match status" value="1"/>
</dbReference>
<organism>
    <name type="scientific">Jannaschia sp. (strain CCS1)</name>
    <dbReference type="NCBI Taxonomy" id="290400"/>
    <lineage>
        <taxon>Bacteria</taxon>
        <taxon>Pseudomonadati</taxon>
        <taxon>Pseudomonadota</taxon>
        <taxon>Alphaproteobacteria</taxon>
        <taxon>Rhodobacterales</taxon>
        <taxon>Roseobacteraceae</taxon>
        <taxon>Jannaschia</taxon>
    </lineage>
</organism>
<comment type="catalytic activity">
    <reaction evidence="1">
        <text>tRNA(His) + L-histidine + ATP = L-histidyl-tRNA(His) + AMP + diphosphate + H(+)</text>
        <dbReference type="Rhea" id="RHEA:17313"/>
        <dbReference type="Rhea" id="RHEA-COMP:9665"/>
        <dbReference type="Rhea" id="RHEA-COMP:9689"/>
        <dbReference type="ChEBI" id="CHEBI:15378"/>
        <dbReference type="ChEBI" id="CHEBI:30616"/>
        <dbReference type="ChEBI" id="CHEBI:33019"/>
        <dbReference type="ChEBI" id="CHEBI:57595"/>
        <dbReference type="ChEBI" id="CHEBI:78442"/>
        <dbReference type="ChEBI" id="CHEBI:78527"/>
        <dbReference type="ChEBI" id="CHEBI:456215"/>
        <dbReference type="EC" id="6.1.1.21"/>
    </reaction>
</comment>
<comment type="subunit">
    <text evidence="1">Homodimer.</text>
</comment>
<comment type="subcellular location">
    <subcellularLocation>
        <location evidence="1">Cytoplasm</location>
    </subcellularLocation>
</comment>
<comment type="similarity">
    <text evidence="1">Belongs to the class-II aminoacyl-tRNA synthetase family.</text>
</comment>
<evidence type="ECO:0000255" key="1">
    <source>
        <dbReference type="HAMAP-Rule" id="MF_00127"/>
    </source>
</evidence>
<protein>
    <recommendedName>
        <fullName evidence="1">Histidine--tRNA ligase</fullName>
        <ecNumber evidence="1">6.1.1.21</ecNumber>
    </recommendedName>
    <alternativeName>
        <fullName evidence="1">Histidyl-tRNA synthetase</fullName>
        <shortName evidence="1">HisRS</shortName>
    </alternativeName>
</protein>